<protein>
    <recommendedName>
        <fullName>Ankycorbin</fullName>
    </recommendedName>
    <alternativeName>
        <fullName>Ankyrin repeat and coiled-coil structure-containing protein</fullName>
    </alternativeName>
    <alternativeName>
        <fullName>Novel retinal pigment epithelial cell protein</fullName>
    </alternativeName>
    <alternativeName>
        <fullName>Retinoic acid-induced protein 14</fullName>
    </alternativeName>
</protein>
<organism>
    <name type="scientific">Homo sapiens</name>
    <name type="common">Human</name>
    <dbReference type="NCBI Taxonomy" id="9606"/>
    <lineage>
        <taxon>Eukaryota</taxon>
        <taxon>Metazoa</taxon>
        <taxon>Chordata</taxon>
        <taxon>Craniata</taxon>
        <taxon>Vertebrata</taxon>
        <taxon>Euteleostomi</taxon>
        <taxon>Mammalia</taxon>
        <taxon>Eutheria</taxon>
        <taxon>Euarchontoglires</taxon>
        <taxon>Primates</taxon>
        <taxon>Haplorrhini</taxon>
        <taxon>Catarrhini</taxon>
        <taxon>Hominidae</taxon>
        <taxon>Homo</taxon>
    </lineage>
</organism>
<keyword id="KW-0007">Acetylation</keyword>
<keyword id="KW-0025">Alternative splicing</keyword>
<keyword id="KW-0040">ANK repeat</keyword>
<keyword id="KW-0965">Cell junction</keyword>
<keyword id="KW-0175">Coiled coil</keyword>
<keyword id="KW-0963">Cytoplasm</keyword>
<keyword id="KW-0206">Cytoskeleton</keyword>
<keyword id="KW-0221">Differentiation</keyword>
<keyword id="KW-0539">Nucleus</keyword>
<keyword id="KW-0597">Phosphoprotein</keyword>
<keyword id="KW-1267">Proteomics identification</keyword>
<keyword id="KW-1185">Reference proteome</keyword>
<keyword id="KW-0677">Repeat</keyword>
<keyword id="KW-0744">Spermatogenesis</keyword>
<feature type="chain" id="PRO_0000239630" description="Ankycorbin">
    <location>
        <begin position="1"/>
        <end position="980"/>
    </location>
</feature>
<feature type="repeat" description="ANK 1">
    <location>
        <begin position="18"/>
        <end position="51"/>
    </location>
</feature>
<feature type="repeat" description="ANK 2">
    <location>
        <begin position="52"/>
        <end position="81"/>
    </location>
</feature>
<feature type="repeat" description="ANK 3">
    <location>
        <begin position="85"/>
        <end position="114"/>
    </location>
</feature>
<feature type="repeat" description="ANK 4">
    <location>
        <begin position="118"/>
        <end position="147"/>
    </location>
</feature>
<feature type="repeat" description="ANK 5">
    <location>
        <begin position="151"/>
        <end position="180"/>
    </location>
</feature>
<feature type="repeat" description="ANK 6">
    <location>
        <begin position="184"/>
        <end position="213"/>
    </location>
</feature>
<feature type="repeat" description="ANK 7">
    <location>
        <begin position="217"/>
        <end position="247"/>
    </location>
</feature>
<feature type="region of interest" description="Disordered" evidence="4">
    <location>
        <begin position="247"/>
        <end position="301"/>
    </location>
</feature>
<feature type="region of interest" description="Disordered" evidence="4">
    <location>
        <begin position="387"/>
        <end position="423"/>
    </location>
</feature>
<feature type="coiled-coil region" evidence="3">
    <location>
        <begin position="349"/>
        <end position="374"/>
    </location>
</feature>
<feature type="coiled-coil region" evidence="3">
    <location>
        <begin position="425"/>
        <end position="947"/>
    </location>
</feature>
<feature type="short sequence motif" description="Nuclear localization signal" evidence="16">
    <location>
        <begin position="270"/>
        <end position="276"/>
    </location>
</feature>
<feature type="compositionally biased region" description="Basic and acidic residues" evidence="4">
    <location>
        <begin position="247"/>
        <end position="259"/>
    </location>
</feature>
<feature type="compositionally biased region" description="Polar residues" evidence="4">
    <location>
        <begin position="282"/>
        <end position="299"/>
    </location>
</feature>
<feature type="modified residue" description="N-acetylmethionine" evidence="20">
    <location>
        <position position="1"/>
    </location>
</feature>
<feature type="modified residue" description="Phosphoserine" evidence="21">
    <location>
        <position position="11"/>
    </location>
</feature>
<feature type="modified residue" description="Phosphothreonine" evidence="18 21 22">
    <location>
        <position position="249"/>
    </location>
</feature>
<feature type="modified residue" description="Phosphoserine" evidence="22">
    <location>
        <position position="281"/>
    </location>
</feature>
<feature type="modified residue" description="Phosphoserine" evidence="22">
    <location>
        <position position="286"/>
    </location>
</feature>
<feature type="modified residue" description="Phosphoserine" evidence="17 19">
    <location>
        <position position="293"/>
    </location>
</feature>
<feature type="modified residue" description="Phosphothreonine" evidence="19">
    <location>
        <position position="295"/>
    </location>
</feature>
<feature type="modified residue" description="Phosphothreonine" evidence="19 21">
    <location>
        <position position="297"/>
    </location>
</feature>
<feature type="modified residue" description="Phosphoserine" evidence="19">
    <location>
        <position position="300"/>
    </location>
</feature>
<feature type="modified residue" description="Phosphoserine" evidence="2">
    <location>
        <position position="304"/>
    </location>
</feature>
<feature type="modified residue" description="Phosphoserine" evidence="1">
    <location>
        <position position="318"/>
    </location>
</feature>
<feature type="modified residue" description="Phosphoserine" evidence="22">
    <location>
        <position position="327"/>
    </location>
</feature>
<feature type="modified residue" description="Phosphoserine" evidence="22">
    <location>
        <position position="329"/>
    </location>
</feature>
<feature type="modified residue" description="Phosphoserine" evidence="18">
    <location>
        <position position="340"/>
    </location>
</feature>
<feature type="modified residue" description="Phosphoserine" evidence="18">
    <location>
        <position position="341"/>
    </location>
</feature>
<feature type="modified residue" description="Phosphoserine" evidence="22">
    <location>
        <position position="350"/>
    </location>
</feature>
<feature type="modified residue" description="Phosphoserine" evidence="18 21 22">
    <location>
        <position position="358"/>
    </location>
</feature>
<feature type="modified residue" description="Phosphoserine" evidence="21">
    <location>
        <position position="419"/>
    </location>
</feature>
<feature type="modified residue" description="Phosphoserine" evidence="18">
    <location>
        <position position="512"/>
    </location>
</feature>
<feature type="modified residue" description="Phosphoserine" evidence="18">
    <location>
        <position position="515"/>
    </location>
</feature>
<feature type="modified residue" description="Phosphoserine" evidence="21">
    <location>
        <position position="667"/>
    </location>
</feature>
<feature type="modified residue" description="Phosphoserine" evidence="2">
    <location>
        <position position="915"/>
    </location>
</feature>
<feature type="splice variant" id="VSP_019248" description="In isoform 2." evidence="12">
    <original>MKSLKAKFRKSD</original>
    <variation>MQPTYLPWLSAKEKK</variation>
    <location>
        <begin position="1"/>
        <end position="12"/>
    </location>
</feature>
<feature type="splice variant" id="VSP_019249" description="In isoform 3." evidence="13">
    <original>MKSLKAKFRKSD</original>
    <variation>MEAK</variation>
    <location>
        <begin position="1"/>
        <end position="12"/>
    </location>
</feature>
<feature type="splice variant" id="VSP_045814" description="In isoform 4." evidence="11">
    <location>
        <begin position="255"/>
        <end position="283"/>
    </location>
</feature>
<feature type="sequence variant" id="VAR_026673" description="In dbSNP:rs17521570.">
    <original>A</original>
    <variation>T</variation>
    <location>
        <position position="44"/>
    </location>
</feature>
<feature type="sequence variant" id="VAR_055517" description="In dbSNP:rs35941954.">
    <original>S</original>
    <variation>N</variation>
    <location>
        <position position="45"/>
    </location>
</feature>
<feature type="sequence variant" id="VAR_055518" description="In dbSNP:rs10472941.">
    <original>V</original>
    <variation>L</variation>
    <location>
        <position position="499"/>
    </location>
</feature>
<feature type="sequence variant" id="VAR_055519" description="In dbSNP:rs1048944." evidence="7 8">
    <original>A</original>
    <variation>S</variation>
    <location>
        <position position="870"/>
    </location>
</feature>
<feature type="sequence conflict" description="In Ref. 1; AAF44722." evidence="14" ref="1">
    <original>K</original>
    <variation>R</variation>
    <location>
        <position position="104"/>
    </location>
</feature>
<feature type="sequence conflict" description="In Ref. 1; AAF44722 and 3; AAQ63889." evidence="14" ref="1 3">
    <original>K</original>
    <variation>T</variation>
    <location>
        <position position="272"/>
    </location>
</feature>
<feature type="sequence conflict" description="In Ref. 3; AAQ63889." evidence="14" ref="3">
    <original>L</original>
    <variation>P</variation>
    <location>
        <position position="434"/>
    </location>
</feature>
<feature type="sequence conflict" description="In Ref. 3; AAQ63889." evidence="14" ref="3">
    <original>K</original>
    <variation>Q</variation>
    <location>
        <position position="491"/>
    </location>
</feature>
<feature type="sequence conflict" description="In Ref. 3; AAQ63889." evidence="14" ref="3">
    <original>Q</original>
    <variation>P</variation>
    <location>
        <position position="602"/>
    </location>
</feature>
<feature type="sequence conflict" description="In Ref. 3; AAQ63889." evidence="14" ref="3">
    <original>E</original>
    <variation>G</variation>
    <location>
        <position position="607"/>
    </location>
</feature>
<feature type="sequence conflict" description="In Ref. 3; AAQ63889." evidence="14" ref="3">
    <original>K</original>
    <variation>E</variation>
    <location>
        <position position="610"/>
    </location>
</feature>
<feature type="sequence conflict" description="In Ref. 8; CAB43236." evidence="14" ref="8">
    <original>R</original>
    <variation>G</variation>
    <location>
        <position position="636"/>
    </location>
</feature>
<feature type="sequence conflict" description="In Ref. 3; AAQ63889." evidence="14" ref="3">
    <original>A</original>
    <variation>L</variation>
    <location>
        <position position="766"/>
    </location>
</feature>
<comment type="function">
    <text evidence="1">Plays a role in actin regulation at the ectoplasmic specialization, a type of cell junction specific to testis. Important for establishment of sperm polarity and normal spermatid adhesion. May also promote integrity of Sertoli cell tight junctions at the blood-testis barrier.</text>
</comment>
<comment type="subunit">
    <text evidence="1 2">Interacts with PALLD. Associates with actin. However, does not bind F-actin directly.</text>
</comment>
<comment type="interaction">
    <interactant intactId="EBI-1023749">
        <id>Q9P0K7</id>
    </interactant>
    <interactant intactId="EBI-347088">
        <id>P63104</id>
        <label>YWHAZ</label>
    </interactant>
    <organismsDiffer>false</organismsDiffer>
    <experiments>4</experiments>
</comment>
<comment type="subcellular location">
    <subcellularLocation>
        <location evidence="15 16">Cytoplasm</location>
        <location evidence="15 16">Cytoskeleton</location>
    </subcellularLocation>
    <subcellularLocation>
        <location evidence="2">Cytoplasm</location>
        <location evidence="2">Cytoskeleton</location>
        <location evidence="2">Stress fiber</location>
    </subcellularLocation>
    <subcellularLocation>
        <location evidence="1">Cytoplasm</location>
        <location evidence="1">Cell cortex</location>
    </subcellularLocation>
    <subcellularLocation>
        <location evidence="1">Cell junction</location>
    </subcellularLocation>
    <subcellularLocation>
        <location evidence="10">Nucleus</location>
    </subcellularLocation>
    <text evidence="1 10">Associated with the cortical actin cytoskeleton structures in terminal web and cell-cell adhesion sites (By similarity). Highly expressed at the ectoplasmic specialization, an actin-rich cell junction specific to the testis (By similarity). Predominantly nuclear in nonconfluent cells (PubMed:16729964).</text>
</comment>
<comment type="alternative products">
    <event type="alternative splicing"/>
    <isoform>
        <id>Q9P0K7-1</id>
        <name>1</name>
        <sequence type="displayed"/>
    </isoform>
    <isoform>
        <id>Q9P0K7-2</id>
        <name>2</name>
        <name>sNORPEG</name>
        <sequence type="described" ref="VSP_019248"/>
    </isoform>
    <isoform>
        <id>Q9P0K7-3</id>
        <name>3</name>
        <sequence type="described" ref="VSP_019249"/>
    </isoform>
    <isoform>
        <id>Q9P0K7-4</id>
        <name>4</name>
        <sequence type="described" ref="VSP_045814"/>
    </isoform>
</comment>
<comment type="tissue specificity">
    <text evidence="5 6 9">Highly expressed in placenta, muscle, kidney and testis. Moderately expressed in heart, brain, lung, liver and intestine. Isoform 2 is widely expressed and expressed in fetal and adult testes, and spermatozoa.</text>
</comment>
<comment type="induction">
    <text evidence="5">Up-regulated by all-trans-retinoic acid (ATRA) in retinal pigment epithelial cells (ARPE-19).</text>
</comment>
<comment type="sequence caution" evidence="14">
    <conflict type="erroneous initiation">
        <sequence resource="EMBL-CDS" id="BAA92572"/>
    </conflict>
</comment>
<comment type="sequence caution" evidence="14">
    <conflict type="erroneous initiation">
        <sequence resource="EMBL-CDS" id="CAB43236"/>
    </conflict>
</comment>
<dbReference type="EMBL" id="AF155135">
    <property type="protein sequence ID" value="AAF44722.1"/>
    <property type="molecule type" value="mRNA"/>
</dbReference>
<dbReference type="EMBL" id="AY317139">
    <property type="protein sequence ID" value="AAP84319.1"/>
    <property type="molecule type" value="mRNA"/>
</dbReference>
<dbReference type="EMBL" id="AY354204">
    <property type="protein sequence ID" value="AAQ63889.2"/>
    <property type="molecule type" value="mRNA"/>
</dbReference>
<dbReference type="EMBL" id="AB037755">
    <property type="protein sequence ID" value="BAA92572.1"/>
    <property type="status" value="ALT_INIT"/>
    <property type="molecule type" value="mRNA"/>
</dbReference>
<dbReference type="EMBL" id="AK314379">
    <property type="status" value="NOT_ANNOTATED_CDS"/>
    <property type="molecule type" value="mRNA"/>
</dbReference>
<dbReference type="EMBL" id="AC016602">
    <property type="status" value="NOT_ANNOTATED_CDS"/>
    <property type="molecule type" value="Genomic_DNA"/>
</dbReference>
<dbReference type="EMBL" id="AC025754">
    <property type="status" value="NOT_ANNOTATED_CDS"/>
    <property type="molecule type" value="Genomic_DNA"/>
</dbReference>
<dbReference type="EMBL" id="AC026801">
    <property type="status" value="NOT_ANNOTATED_CDS"/>
    <property type="molecule type" value="Genomic_DNA"/>
</dbReference>
<dbReference type="EMBL" id="BC052988">
    <property type="protein sequence ID" value="AAH52988.1"/>
    <property type="molecule type" value="mRNA"/>
</dbReference>
<dbReference type="EMBL" id="AL050011">
    <property type="protein sequence ID" value="CAB43236.2"/>
    <property type="status" value="ALT_INIT"/>
    <property type="molecule type" value="mRNA"/>
</dbReference>
<dbReference type="CCDS" id="CCDS34142.1">
    <molecule id="Q9P0K7-1"/>
</dbReference>
<dbReference type="CCDS" id="CCDS54837.1">
    <molecule id="Q9P0K7-4"/>
</dbReference>
<dbReference type="CCDS" id="CCDS54838.1">
    <molecule id="Q9P0K7-3"/>
</dbReference>
<dbReference type="CCDS" id="CCDS54839.1">
    <molecule id="Q9P0K7-2"/>
</dbReference>
<dbReference type="PIR" id="T08700">
    <property type="entry name" value="T08700"/>
</dbReference>
<dbReference type="RefSeq" id="NP_001138992.1">
    <molecule id="Q9P0K7-1"/>
    <property type="nucleotide sequence ID" value="NM_001145520.1"/>
</dbReference>
<dbReference type="RefSeq" id="NP_001138993.1">
    <molecule id="Q9P0K7-1"/>
    <property type="nucleotide sequence ID" value="NM_001145521.2"/>
</dbReference>
<dbReference type="RefSeq" id="NP_001138994.1">
    <molecule id="Q9P0K7-4"/>
    <property type="nucleotide sequence ID" value="NM_001145522.2"/>
</dbReference>
<dbReference type="RefSeq" id="NP_001138995.1">
    <molecule id="Q9P0K7-3"/>
    <property type="nucleotide sequence ID" value="NM_001145523.2"/>
</dbReference>
<dbReference type="RefSeq" id="NP_001138997.1">
    <molecule id="Q9P0K7-2"/>
    <property type="nucleotide sequence ID" value="NM_001145525.2"/>
</dbReference>
<dbReference type="RefSeq" id="NP_056392.2">
    <molecule id="Q9P0K7-1"/>
    <property type="nucleotide sequence ID" value="NM_015577.3"/>
</dbReference>
<dbReference type="RefSeq" id="XP_006714532.1">
    <molecule id="Q9P0K7-1"/>
    <property type="nucleotide sequence ID" value="XM_006714469.3"/>
</dbReference>
<dbReference type="RefSeq" id="XP_011512319.1">
    <molecule id="Q9P0K7-1"/>
    <property type="nucleotide sequence ID" value="XM_011514017.3"/>
</dbReference>
<dbReference type="RefSeq" id="XP_011512320.1">
    <molecule id="Q9P0K7-1"/>
    <property type="nucleotide sequence ID" value="XM_011514018.2"/>
</dbReference>
<dbReference type="RefSeq" id="XP_011512321.1">
    <molecule id="Q9P0K7-1"/>
    <property type="nucleotide sequence ID" value="XM_011514019.2"/>
</dbReference>
<dbReference type="RefSeq" id="XP_011512322.1">
    <molecule id="Q9P0K7-1"/>
    <property type="nucleotide sequence ID" value="XM_011514020.2"/>
</dbReference>
<dbReference type="RefSeq" id="XP_011512323.1">
    <molecule id="Q9P0K7-1"/>
    <property type="nucleotide sequence ID" value="XM_011514021.3"/>
</dbReference>
<dbReference type="RefSeq" id="XP_011512324.1">
    <molecule id="Q9P0K7-1"/>
    <property type="nucleotide sequence ID" value="XM_011514022.2"/>
</dbReference>
<dbReference type="RefSeq" id="XP_016864824.1">
    <molecule id="Q9P0K7-4"/>
    <property type="nucleotide sequence ID" value="XM_017009335.2"/>
</dbReference>
<dbReference type="RefSeq" id="XP_047273044.1">
    <molecule id="Q9P0K7-1"/>
    <property type="nucleotide sequence ID" value="XM_047417088.1"/>
</dbReference>
<dbReference type="RefSeq" id="XP_047273045.1">
    <molecule id="Q9P0K7-1"/>
    <property type="nucleotide sequence ID" value="XM_047417089.1"/>
</dbReference>
<dbReference type="RefSeq" id="XP_047273047.1">
    <molecule id="Q9P0K7-4"/>
    <property type="nucleotide sequence ID" value="XM_047417091.1"/>
</dbReference>
<dbReference type="RefSeq" id="XP_047273048.1">
    <molecule id="Q9P0K7-4"/>
    <property type="nucleotide sequence ID" value="XM_047417092.1"/>
</dbReference>
<dbReference type="RefSeq" id="XP_054208314.1">
    <molecule id="Q9P0K7-1"/>
    <property type="nucleotide sequence ID" value="XM_054352339.1"/>
</dbReference>
<dbReference type="RefSeq" id="XP_054208315.1">
    <molecule id="Q9P0K7-1"/>
    <property type="nucleotide sequence ID" value="XM_054352340.1"/>
</dbReference>
<dbReference type="RefSeq" id="XP_054208316.1">
    <molecule id="Q9P0K7-1"/>
    <property type="nucleotide sequence ID" value="XM_054352341.1"/>
</dbReference>
<dbReference type="RefSeq" id="XP_054208317.1">
    <molecule id="Q9P0K7-1"/>
    <property type="nucleotide sequence ID" value="XM_054352342.1"/>
</dbReference>
<dbReference type="RefSeq" id="XP_054208318.1">
    <molecule id="Q9P0K7-1"/>
    <property type="nucleotide sequence ID" value="XM_054352343.1"/>
</dbReference>
<dbReference type="RefSeq" id="XP_054208319.1">
    <molecule id="Q9P0K7-1"/>
    <property type="nucleotide sequence ID" value="XM_054352344.1"/>
</dbReference>
<dbReference type="RefSeq" id="XP_054208320.1">
    <molecule id="Q9P0K7-1"/>
    <property type="nucleotide sequence ID" value="XM_054352345.1"/>
</dbReference>
<dbReference type="RefSeq" id="XP_054208321.1">
    <molecule id="Q9P0K7-1"/>
    <property type="nucleotide sequence ID" value="XM_054352346.1"/>
</dbReference>
<dbReference type="RefSeq" id="XP_054208322.1">
    <molecule id="Q9P0K7-1"/>
    <property type="nucleotide sequence ID" value="XM_054352347.1"/>
</dbReference>
<dbReference type="RefSeq" id="XP_054208327.1">
    <molecule id="Q9P0K7-4"/>
    <property type="nucleotide sequence ID" value="XM_054352352.1"/>
</dbReference>
<dbReference type="RefSeq" id="XP_054208328.1">
    <molecule id="Q9P0K7-4"/>
    <property type="nucleotide sequence ID" value="XM_054352353.1"/>
</dbReference>
<dbReference type="RefSeq" id="XP_054208329.1">
    <molecule id="Q9P0K7-4"/>
    <property type="nucleotide sequence ID" value="XM_054352354.1"/>
</dbReference>
<dbReference type="SMR" id="Q9P0K7"/>
<dbReference type="BioGRID" id="117526">
    <property type="interactions" value="249"/>
</dbReference>
<dbReference type="FunCoup" id="Q9P0K7">
    <property type="interactions" value="2242"/>
</dbReference>
<dbReference type="IntAct" id="Q9P0K7">
    <property type="interactions" value="133"/>
</dbReference>
<dbReference type="MINT" id="Q9P0K7"/>
<dbReference type="STRING" id="9606.ENSP00000427123"/>
<dbReference type="CarbonylDB" id="Q9P0K7"/>
<dbReference type="GlyGen" id="Q9P0K7">
    <property type="glycosylation" value="6 sites, 3 N-linked glycans (4 sites), 1 O-linked glycan (2 sites)"/>
</dbReference>
<dbReference type="iPTMnet" id="Q9P0K7"/>
<dbReference type="MetOSite" id="Q9P0K7"/>
<dbReference type="PhosphoSitePlus" id="Q9P0K7"/>
<dbReference type="SwissPalm" id="Q9P0K7"/>
<dbReference type="BioMuta" id="RAI14"/>
<dbReference type="DMDM" id="108860920"/>
<dbReference type="jPOST" id="Q9P0K7"/>
<dbReference type="MassIVE" id="Q9P0K7"/>
<dbReference type="PaxDb" id="9606-ENSP00000427123"/>
<dbReference type="PeptideAtlas" id="Q9P0K7"/>
<dbReference type="ProteomicsDB" id="19863"/>
<dbReference type="ProteomicsDB" id="83561">
    <molecule id="Q9P0K7-1"/>
</dbReference>
<dbReference type="ProteomicsDB" id="83562">
    <molecule id="Q9P0K7-2"/>
</dbReference>
<dbReference type="ProteomicsDB" id="83563">
    <molecule id="Q9P0K7-3"/>
</dbReference>
<dbReference type="Pumba" id="Q9P0K7"/>
<dbReference type="Antibodypedia" id="22784">
    <property type="antibodies" value="78 antibodies from 24 providers"/>
</dbReference>
<dbReference type="DNASU" id="26064"/>
<dbReference type="Ensembl" id="ENST00000265109.8">
    <molecule id="Q9P0K7-1"/>
    <property type="protein sequence ID" value="ENSP00000265109.3"/>
    <property type="gene ID" value="ENSG00000039560.14"/>
</dbReference>
<dbReference type="Ensembl" id="ENST00000428746.6">
    <molecule id="Q9P0K7-1"/>
    <property type="protein sequence ID" value="ENSP00000388725.2"/>
    <property type="gene ID" value="ENSG00000039560.14"/>
</dbReference>
<dbReference type="Ensembl" id="ENST00000503673.5">
    <molecule id="Q9P0K7-1"/>
    <property type="protein sequence ID" value="ENSP00000422942.1"/>
    <property type="gene ID" value="ENSG00000039560.14"/>
</dbReference>
<dbReference type="Ensembl" id="ENST00000506376.1">
    <molecule id="Q9P0K7-3"/>
    <property type="protein sequence ID" value="ENSP00000423854.1"/>
    <property type="gene ID" value="ENSG00000039560.14"/>
</dbReference>
<dbReference type="Ensembl" id="ENST00000512629.5">
    <molecule id="Q9P0K7-4"/>
    <property type="protein sequence ID" value="ENSP00000422377.1"/>
    <property type="gene ID" value="ENSG00000039560.14"/>
</dbReference>
<dbReference type="Ensembl" id="ENST00000515799.5">
    <molecule id="Q9P0K7-2"/>
    <property type="protein sequence ID" value="ENSP00000427123.1"/>
    <property type="gene ID" value="ENSG00000039560.14"/>
</dbReference>
<dbReference type="GeneID" id="26064"/>
<dbReference type="KEGG" id="hsa:26064"/>
<dbReference type="MANE-Select" id="ENST00000265109.8">
    <property type="protein sequence ID" value="ENSP00000265109.3"/>
    <property type="RefSeq nucleotide sequence ID" value="NM_015577.3"/>
    <property type="RefSeq protein sequence ID" value="NP_056392.2"/>
</dbReference>
<dbReference type="UCSC" id="uc003jir.4">
    <molecule id="Q9P0K7-1"/>
    <property type="organism name" value="human"/>
</dbReference>
<dbReference type="AGR" id="HGNC:14873"/>
<dbReference type="CTD" id="26064"/>
<dbReference type="DisGeNET" id="26064"/>
<dbReference type="GeneCards" id="RAI14"/>
<dbReference type="HGNC" id="HGNC:14873">
    <property type="gene designation" value="RAI14"/>
</dbReference>
<dbReference type="HPA" id="ENSG00000039560">
    <property type="expression patterns" value="Low tissue specificity"/>
</dbReference>
<dbReference type="MIM" id="606586">
    <property type="type" value="gene"/>
</dbReference>
<dbReference type="neXtProt" id="NX_Q9P0K7"/>
<dbReference type="OpenTargets" id="ENSG00000039560"/>
<dbReference type="PharmGKB" id="PA34189"/>
<dbReference type="VEuPathDB" id="HostDB:ENSG00000039560"/>
<dbReference type="eggNOG" id="ENOG502QUEG">
    <property type="taxonomic scope" value="Eukaryota"/>
</dbReference>
<dbReference type="GeneTree" id="ENSGT00940000157400"/>
<dbReference type="HOGENOM" id="CLU_005323_2_0_1"/>
<dbReference type="InParanoid" id="Q9P0K7"/>
<dbReference type="OMA" id="EEALCEM"/>
<dbReference type="OrthoDB" id="194358at2759"/>
<dbReference type="PAN-GO" id="Q9P0K7">
    <property type="GO annotations" value="0 GO annotations based on evolutionary models"/>
</dbReference>
<dbReference type="PhylomeDB" id="Q9P0K7"/>
<dbReference type="TreeFam" id="TF331274"/>
<dbReference type="PathwayCommons" id="Q9P0K7"/>
<dbReference type="SignaLink" id="Q9P0K7"/>
<dbReference type="SIGNOR" id="Q9P0K7"/>
<dbReference type="BioGRID-ORCS" id="26064">
    <property type="hits" value="12 hits in 1162 CRISPR screens"/>
</dbReference>
<dbReference type="ChiTaRS" id="RAI14">
    <property type="organism name" value="human"/>
</dbReference>
<dbReference type="GeneWiki" id="RAI14"/>
<dbReference type="GenomeRNAi" id="26064"/>
<dbReference type="Pharos" id="Q9P0K7">
    <property type="development level" value="Tbio"/>
</dbReference>
<dbReference type="PRO" id="PR:Q9P0K7"/>
<dbReference type="Proteomes" id="UP000005640">
    <property type="component" value="Chromosome 5"/>
</dbReference>
<dbReference type="RNAct" id="Q9P0K7">
    <property type="molecule type" value="protein"/>
</dbReference>
<dbReference type="Bgee" id="ENSG00000039560">
    <property type="expression patterns" value="Expressed in stromal cell of endometrium and 187 other cell types or tissues"/>
</dbReference>
<dbReference type="ExpressionAtlas" id="Q9P0K7">
    <property type="expression patterns" value="baseline and differential"/>
</dbReference>
<dbReference type="GO" id="GO:0070161">
    <property type="term" value="C:anchoring junction"/>
    <property type="evidence" value="ECO:0007669"/>
    <property type="project" value="UniProtKB-SubCell"/>
</dbReference>
<dbReference type="GO" id="GO:0005938">
    <property type="term" value="C:cell cortex"/>
    <property type="evidence" value="ECO:0007669"/>
    <property type="project" value="UniProtKB-SubCell"/>
</dbReference>
<dbReference type="GO" id="GO:0005829">
    <property type="term" value="C:cytosol"/>
    <property type="evidence" value="ECO:0000314"/>
    <property type="project" value="HPA"/>
</dbReference>
<dbReference type="GO" id="GO:0001650">
    <property type="term" value="C:fibrillar center"/>
    <property type="evidence" value="ECO:0000314"/>
    <property type="project" value="HPA"/>
</dbReference>
<dbReference type="GO" id="GO:0005654">
    <property type="term" value="C:nucleoplasm"/>
    <property type="evidence" value="ECO:0000314"/>
    <property type="project" value="HPA"/>
</dbReference>
<dbReference type="GO" id="GO:0001725">
    <property type="term" value="C:stress fiber"/>
    <property type="evidence" value="ECO:0007669"/>
    <property type="project" value="UniProtKB-SubCell"/>
</dbReference>
<dbReference type="GO" id="GO:0003779">
    <property type="term" value="F:actin binding"/>
    <property type="evidence" value="ECO:0007669"/>
    <property type="project" value="InterPro"/>
</dbReference>
<dbReference type="GO" id="GO:0030154">
    <property type="term" value="P:cell differentiation"/>
    <property type="evidence" value="ECO:0007669"/>
    <property type="project" value="UniProtKB-KW"/>
</dbReference>
<dbReference type="GO" id="GO:0007283">
    <property type="term" value="P:spermatogenesis"/>
    <property type="evidence" value="ECO:0007669"/>
    <property type="project" value="UniProtKB-KW"/>
</dbReference>
<dbReference type="FunFam" id="1.25.40.20:FF:000196">
    <property type="entry name" value="Retinoic acid induced 14"/>
    <property type="match status" value="1"/>
</dbReference>
<dbReference type="FunFam" id="1.25.40.20:FF:000083">
    <property type="entry name" value="Uveal autoantigen with coiled-coil domains and ankyrin repeats"/>
    <property type="match status" value="1"/>
</dbReference>
<dbReference type="Gene3D" id="1.25.40.20">
    <property type="entry name" value="Ankyrin repeat-containing domain"/>
    <property type="match status" value="2"/>
</dbReference>
<dbReference type="InterPro" id="IPR002110">
    <property type="entry name" value="Ankyrin_rpt"/>
</dbReference>
<dbReference type="InterPro" id="IPR036770">
    <property type="entry name" value="Ankyrin_rpt-contain_sf"/>
</dbReference>
<dbReference type="InterPro" id="IPR042420">
    <property type="entry name" value="RAI14/UACA"/>
</dbReference>
<dbReference type="PANTHER" id="PTHR24129">
    <property type="entry name" value="ANKYCORBIN"/>
    <property type="match status" value="1"/>
</dbReference>
<dbReference type="PANTHER" id="PTHR24129:SF0">
    <property type="entry name" value="ANKYCORBIN"/>
    <property type="match status" value="1"/>
</dbReference>
<dbReference type="Pfam" id="PF00023">
    <property type="entry name" value="Ank"/>
    <property type="match status" value="1"/>
</dbReference>
<dbReference type="Pfam" id="PF12796">
    <property type="entry name" value="Ank_2"/>
    <property type="match status" value="1"/>
</dbReference>
<dbReference type="Pfam" id="PF13857">
    <property type="entry name" value="Ank_5"/>
    <property type="match status" value="1"/>
</dbReference>
<dbReference type="PRINTS" id="PR01415">
    <property type="entry name" value="ANKYRIN"/>
</dbReference>
<dbReference type="SMART" id="SM00248">
    <property type="entry name" value="ANK"/>
    <property type="match status" value="6"/>
</dbReference>
<dbReference type="SUPFAM" id="SSF48403">
    <property type="entry name" value="Ankyrin repeat"/>
    <property type="match status" value="1"/>
</dbReference>
<dbReference type="PROSITE" id="PS50297">
    <property type="entry name" value="ANK_REP_REGION"/>
    <property type="match status" value="1"/>
</dbReference>
<dbReference type="PROSITE" id="PS50088">
    <property type="entry name" value="ANK_REPEAT"/>
    <property type="match status" value="5"/>
</dbReference>
<reference key="1">
    <citation type="journal article" date="2001" name="J. Biol. Chem.">
        <title>Molecular characterization and developmental expression of NORPEG, a novel gene induced by retinoic acid.</title>
        <authorList>
            <person name="Kutty R.K."/>
            <person name="Kutty G."/>
            <person name="Samuel W."/>
            <person name="Duncan T."/>
            <person name="Bridges C.C."/>
            <person name="El-Sherbeeny A."/>
            <person name="Nagineni C.N."/>
            <person name="Smith S.B."/>
            <person name="Wiggert B."/>
        </authorList>
    </citation>
    <scope>NUCLEOTIDE SEQUENCE [MRNA] (ISOFORM 1)</scope>
    <scope>SUBCELLULAR LOCATION</scope>
    <scope>INDUCTION</scope>
    <scope>TISSUE SPECIFICITY</scope>
    <source>
        <tissue>Retinal pigment epithelium</tissue>
    </source>
</reference>
<reference key="2">
    <citation type="journal article" date="2005" name="Asian J. Androl.">
        <title>Expression of a novel alternative transcript of the novel retinal pigment epithelial cell gene NORPEG in human testes.</title>
        <authorList>
            <person name="Yuan W."/>
            <person name="Zheng Y."/>
            <person name="Huo R."/>
            <person name="Lu L."/>
            <person name="Huang X.-Y."/>
            <person name="Yin L.-L."/>
            <person name="Li J.-M."/>
            <person name="Zhou Z.-M."/>
            <person name="Sha J.-H."/>
        </authorList>
    </citation>
    <scope>NUCLEOTIDE SEQUENCE [MRNA] (ISOFORM 2)</scope>
    <scope>TISSUE SPECIFICITY</scope>
    <source>
        <tissue>Testis</tissue>
    </source>
</reference>
<reference key="3">
    <citation type="submission" date="2003-09" db="EMBL/GenBank/DDBJ databases">
        <authorList>
            <person name="Sha J.H."/>
            <person name="Zhou Z.M."/>
            <person name="Li J.M."/>
        </authorList>
    </citation>
    <scope>NUCLEOTIDE SEQUENCE [MRNA] (ISOFORM 3)</scope>
    <source>
        <tissue>Testis</tissue>
    </source>
</reference>
<reference key="4">
    <citation type="journal article" date="2000" name="DNA Res.">
        <title>Prediction of the coding sequences of unidentified human genes. XVI. The complete sequences of 150 new cDNA clones from brain which code for large proteins in vitro.</title>
        <authorList>
            <person name="Nagase T."/>
            <person name="Kikuno R."/>
            <person name="Ishikawa K."/>
            <person name="Hirosawa M."/>
            <person name="Ohara O."/>
        </authorList>
    </citation>
    <scope>NUCLEOTIDE SEQUENCE [LARGE SCALE MRNA] (ISOFORM 1)</scope>
    <source>
        <tissue>Brain</tissue>
    </source>
</reference>
<reference key="5">
    <citation type="journal article" date="2004" name="Nat. Genet.">
        <title>Complete sequencing and characterization of 21,243 full-length human cDNAs.</title>
        <authorList>
            <person name="Ota T."/>
            <person name="Suzuki Y."/>
            <person name="Nishikawa T."/>
            <person name="Otsuki T."/>
            <person name="Sugiyama T."/>
            <person name="Irie R."/>
            <person name="Wakamatsu A."/>
            <person name="Hayashi K."/>
            <person name="Sato H."/>
            <person name="Nagai K."/>
            <person name="Kimura K."/>
            <person name="Makita H."/>
            <person name="Sekine M."/>
            <person name="Obayashi M."/>
            <person name="Nishi T."/>
            <person name="Shibahara T."/>
            <person name="Tanaka T."/>
            <person name="Ishii S."/>
            <person name="Yamamoto J."/>
            <person name="Saito K."/>
            <person name="Kawai Y."/>
            <person name="Isono Y."/>
            <person name="Nakamura Y."/>
            <person name="Nagahari K."/>
            <person name="Murakami K."/>
            <person name="Yasuda T."/>
            <person name="Iwayanagi T."/>
            <person name="Wagatsuma M."/>
            <person name="Shiratori A."/>
            <person name="Sudo H."/>
            <person name="Hosoiri T."/>
            <person name="Kaku Y."/>
            <person name="Kodaira H."/>
            <person name="Kondo H."/>
            <person name="Sugawara M."/>
            <person name="Takahashi M."/>
            <person name="Kanda K."/>
            <person name="Yokoi T."/>
            <person name="Furuya T."/>
            <person name="Kikkawa E."/>
            <person name="Omura Y."/>
            <person name="Abe K."/>
            <person name="Kamihara K."/>
            <person name="Katsuta N."/>
            <person name="Sato K."/>
            <person name="Tanikawa M."/>
            <person name="Yamazaki M."/>
            <person name="Ninomiya K."/>
            <person name="Ishibashi T."/>
            <person name="Yamashita H."/>
            <person name="Murakawa K."/>
            <person name="Fujimori K."/>
            <person name="Tanai H."/>
            <person name="Kimata M."/>
            <person name="Watanabe M."/>
            <person name="Hiraoka S."/>
            <person name="Chiba Y."/>
            <person name="Ishida S."/>
            <person name="Ono Y."/>
            <person name="Takiguchi S."/>
            <person name="Watanabe S."/>
            <person name="Yosida M."/>
            <person name="Hotuta T."/>
            <person name="Kusano J."/>
            <person name="Kanehori K."/>
            <person name="Takahashi-Fujii A."/>
            <person name="Hara H."/>
            <person name="Tanase T.-O."/>
            <person name="Nomura Y."/>
            <person name="Togiya S."/>
            <person name="Komai F."/>
            <person name="Hara R."/>
            <person name="Takeuchi K."/>
            <person name="Arita M."/>
            <person name="Imose N."/>
            <person name="Musashino K."/>
            <person name="Yuuki H."/>
            <person name="Oshima A."/>
            <person name="Sasaki N."/>
            <person name="Aotsuka S."/>
            <person name="Yoshikawa Y."/>
            <person name="Matsunawa H."/>
            <person name="Ichihara T."/>
            <person name="Shiohata N."/>
            <person name="Sano S."/>
            <person name="Moriya S."/>
            <person name="Momiyama H."/>
            <person name="Satoh N."/>
            <person name="Takami S."/>
            <person name="Terashima Y."/>
            <person name="Suzuki O."/>
            <person name="Nakagawa S."/>
            <person name="Senoh A."/>
            <person name="Mizoguchi H."/>
            <person name="Goto Y."/>
            <person name="Shimizu F."/>
            <person name="Wakebe H."/>
            <person name="Hishigaki H."/>
            <person name="Watanabe T."/>
            <person name="Sugiyama A."/>
            <person name="Takemoto M."/>
            <person name="Kawakami B."/>
            <person name="Yamazaki M."/>
            <person name="Watanabe K."/>
            <person name="Kumagai A."/>
            <person name="Itakura S."/>
            <person name="Fukuzumi Y."/>
            <person name="Fujimori Y."/>
            <person name="Komiyama M."/>
            <person name="Tashiro H."/>
            <person name="Tanigami A."/>
            <person name="Fujiwara T."/>
            <person name="Ono T."/>
            <person name="Yamada K."/>
            <person name="Fujii Y."/>
            <person name="Ozaki K."/>
            <person name="Hirao M."/>
            <person name="Ohmori Y."/>
            <person name="Kawabata A."/>
            <person name="Hikiji T."/>
            <person name="Kobatake N."/>
            <person name="Inagaki H."/>
            <person name="Ikema Y."/>
            <person name="Okamoto S."/>
            <person name="Okitani R."/>
            <person name="Kawakami T."/>
            <person name="Noguchi S."/>
            <person name="Itoh T."/>
            <person name="Shigeta K."/>
            <person name="Senba T."/>
            <person name="Matsumura K."/>
            <person name="Nakajima Y."/>
            <person name="Mizuno T."/>
            <person name="Morinaga M."/>
            <person name="Sasaki M."/>
            <person name="Togashi T."/>
            <person name="Oyama M."/>
            <person name="Hata H."/>
            <person name="Watanabe M."/>
            <person name="Komatsu T."/>
            <person name="Mizushima-Sugano J."/>
            <person name="Satoh T."/>
            <person name="Shirai Y."/>
            <person name="Takahashi Y."/>
            <person name="Nakagawa K."/>
            <person name="Okumura K."/>
            <person name="Nagase T."/>
            <person name="Nomura N."/>
            <person name="Kikuchi H."/>
            <person name="Masuho Y."/>
            <person name="Yamashita R."/>
            <person name="Nakai K."/>
            <person name="Yada T."/>
            <person name="Nakamura Y."/>
            <person name="Ohara O."/>
            <person name="Isogai T."/>
            <person name="Sugano S."/>
        </authorList>
    </citation>
    <scope>NUCLEOTIDE SEQUENCE [LARGE SCALE MRNA] (ISOFORM 4)</scope>
    <scope>VARIANT SER-870</scope>
    <source>
        <tissue>Placenta</tissue>
    </source>
</reference>
<reference key="6">
    <citation type="journal article" date="2004" name="Nature">
        <title>The DNA sequence and comparative analysis of human chromosome 5.</title>
        <authorList>
            <person name="Schmutz J."/>
            <person name="Martin J."/>
            <person name="Terry A."/>
            <person name="Couronne O."/>
            <person name="Grimwood J."/>
            <person name="Lowry S."/>
            <person name="Gordon L.A."/>
            <person name="Scott D."/>
            <person name="Xie G."/>
            <person name="Huang W."/>
            <person name="Hellsten U."/>
            <person name="Tran-Gyamfi M."/>
            <person name="She X."/>
            <person name="Prabhakar S."/>
            <person name="Aerts A."/>
            <person name="Altherr M."/>
            <person name="Bajorek E."/>
            <person name="Black S."/>
            <person name="Branscomb E."/>
            <person name="Caoile C."/>
            <person name="Challacombe J.F."/>
            <person name="Chan Y.M."/>
            <person name="Denys M."/>
            <person name="Detter J.C."/>
            <person name="Escobar J."/>
            <person name="Flowers D."/>
            <person name="Fotopulos D."/>
            <person name="Glavina T."/>
            <person name="Gomez M."/>
            <person name="Gonzales E."/>
            <person name="Goodstein D."/>
            <person name="Grigoriev I."/>
            <person name="Groza M."/>
            <person name="Hammon N."/>
            <person name="Hawkins T."/>
            <person name="Haydu L."/>
            <person name="Israni S."/>
            <person name="Jett J."/>
            <person name="Kadner K."/>
            <person name="Kimball H."/>
            <person name="Kobayashi A."/>
            <person name="Lopez F."/>
            <person name="Lou Y."/>
            <person name="Martinez D."/>
            <person name="Medina C."/>
            <person name="Morgan J."/>
            <person name="Nandkeshwar R."/>
            <person name="Noonan J.P."/>
            <person name="Pitluck S."/>
            <person name="Pollard M."/>
            <person name="Predki P."/>
            <person name="Priest J."/>
            <person name="Ramirez L."/>
            <person name="Retterer J."/>
            <person name="Rodriguez A."/>
            <person name="Rogers S."/>
            <person name="Salamov A."/>
            <person name="Salazar A."/>
            <person name="Thayer N."/>
            <person name="Tice H."/>
            <person name="Tsai M."/>
            <person name="Ustaszewska A."/>
            <person name="Vo N."/>
            <person name="Wheeler J."/>
            <person name="Wu K."/>
            <person name="Yang J."/>
            <person name="Dickson M."/>
            <person name="Cheng J.-F."/>
            <person name="Eichler E.E."/>
            <person name="Olsen A."/>
            <person name="Pennacchio L.A."/>
            <person name="Rokhsar D.S."/>
            <person name="Richardson P."/>
            <person name="Lucas S.M."/>
            <person name="Myers R.M."/>
            <person name="Rubin E.M."/>
        </authorList>
    </citation>
    <scope>NUCLEOTIDE SEQUENCE [LARGE SCALE GENOMIC DNA]</scope>
</reference>
<reference key="7">
    <citation type="journal article" date="2004" name="Genome Res.">
        <title>The status, quality, and expansion of the NIH full-length cDNA project: the Mammalian Gene Collection (MGC).</title>
        <authorList>
            <consortium name="The MGC Project Team"/>
        </authorList>
    </citation>
    <scope>NUCLEOTIDE SEQUENCE [LARGE SCALE MRNA] (ISOFORM 1)</scope>
    <scope>VARIANT SER-870</scope>
    <source>
        <tissue>Skin</tissue>
    </source>
</reference>
<reference key="8">
    <citation type="journal article" date="2007" name="BMC Genomics">
        <title>The full-ORF clone resource of the German cDNA consortium.</title>
        <authorList>
            <person name="Bechtel S."/>
            <person name="Rosenfelder H."/>
            <person name="Duda A."/>
            <person name="Schmidt C.P."/>
            <person name="Ernst U."/>
            <person name="Wellenreuther R."/>
            <person name="Mehrle A."/>
            <person name="Schuster C."/>
            <person name="Bahr A."/>
            <person name="Bloecker H."/>
            <person name="Heubner D."/>
            <person name="Hoerlein A."/>
            <person name="Michel G."/>
            <person name="Wedler H."/>
            <person name="Koehrer K."/>
            <person name="Ottenwaelder B."/>
            <person name="Poustka A."/>
            <person name="Wiemann S."/>
            <person name="Schupp I."/>
        </authorList>
    </citation>
    <scope>NUCLEOTIDE SEQUENCE [LARGE SCALE MRNA] OF 636-980</scope>
    <source>
        <tissue>Brain</tissue>
    </source>
</reference>
<reference key="9">
    <citation type="journal article" date="2000" name="Genes Cells">
        <title>Ankycorbin: a novel actin cytoskeleton-associated protein.</title>
        <authorList>
            <person name="Peng Y.-F."/>
            <person name="Mandai K."/>
            <person name="Sakisaka T."/>
            <person name="Okabe N."/>
            <person name="Yamamoto Y."/>
            <person name="Yokoyama S."/>
            <person name="Mizoguchi A."/>
            <person name="Shiozaki H."/>
            <person name="Monden M."/>
            <person name="Takai Y."/>
        </authorList>
    </citation>
    <scope>TISSUE SPECIFICITY</scope>
</reference>
<reference key="10">
    <citation type="journal article" date="2006" name="Biochem. Biophys. Res. Commun.">
        <title>Cell density-dependent nuclear/cytoplasmic localization of NORPEG (RAI14) protein.</title>
        <authorList>
            <person name="Kutty R.K."/>
            <person name="Chen S."/>
            <person name="Samuel W."/>
            <person name="Vijayasarathy C."/>
            <person name="Duncan T."/>
            <person name="Tsai J.Y."/>
            <person name="Fariss R.N."/>
            <person name="Carper D."/>
            <person name="Jaworski C."/>
            <person name="Wiggert B."/>
        </authorList>
    </citation>
    <scope>SUBCELLULAR LOCATION</scope>
    <scope>NUCLEAR LOCALIZATION SIGNAL</scope>
    <source>
        <tissue>Retinal pigment epithelium</tissue>
    </source>
</reference>
<reference key="11">
    <citation type="journal article" date="2006" name="Cell">
        <title>Global, in vivo, and site-specific phosphorylation dynamics in signaling networks.</title>
        <authorList>
            <person name="Olsen J.V."/>
            <person name="Blagoev B."/>
            <person name="Gnad F."/>
            <person name="Macek B."/>
            <person name="Kumar C."/>
            <person name="Mortensen P."/>
            <person name="Mann M."/>
        </authorList>
    </citation>
    <scope>IDENTIFICATION BY MASS SPECTROMETRY [LARGE SCALE ANALYSIS]</scope>
    <source>
        <tissue>Cervix carcinoma</tissue>
    </source>
</reference>
<reference key="12">
    <citation type="journal article" date="2008" name="Proc. Natl. Acad. Sci. U.S.A.">
        <title>A quantitative atlas of mitotic phosphorylation.</title>
        <authorList>
            <person name="Dephoure N."/>
            <person name="Zhou C."/>
            <person name="Villen J."/>
            <person name="Beausoleil S.A."/>
            <person name="Bakalarski C.E."/>
            <person name="Elledge S.J."/>
            <person name="Gygi S.P."/>
        </authorList>
    </citation>
    <scope>PHOSPHORYLATION [LARGE SCALE ANALYSIS] AT SER-293</scope>
    <scope>IDENTIFICATION BY MASS SPECTROMETRY [LARGE SCALE ANALYSIS]</scope>
    <source>
        <tissue>Cervix carcinoma</tissue>
    </source>
</reference>
<reference key="13">
    <citation type="journal article" date="2009" name="Mol. Cell. Proteomics">
        <title>Large-scale proteomics analysis of the human kinome.</title>
        <authorList>
            <person name="Oppermann F.S."/>
            <person name="Gnad F."/>
            <person name="Olsen J.V."/>
            <person name="Hornberger R."/>
            <person name="Greff Z."/>
            <person name="Keri G."/>
            <person name="Mann M."/>
            <person name="Daub H."/>
        </authorList>
    </citation>
    <scope>IDENTIFICATION BY MASS SPECTROMETRY [LARGE SCALE ANALYSIS]</scope>
</reference>
<reference key="14">
    <citation type="journal article" date="2010" name="Sci. Signal.">
        <title>Quantitative phosphoproteomics reveals widespread full phosphorylation site occupancy during mitosis.</title>
        <authorList>
            <person name="Olsen J.V."/>
            <person name="Vermeulen M."/>
            <person name="Santamaria A."/>
            <person name="Kumar C."/>
            <person name="Miller M.L."/>
            <person name="Jensen L.J."/>
            <person name="Gnad F."/>
            <person name="Cox J."/>
            <person name="Jensen T.S."/>
            <person name="Nigg E.A."/>
            <person name="Brunak S."/>
            <person name="Mann M."/>
        </authorList>
    </citation>
    <scope>PHOSPHORYLATION [LARGE SCALE ANALYSIS] AT THR-249; SER-340; SER-341; SER-358; SER-512 AND SER-515</scope>
    <scope>IDENTIFICATION BY MASS SPECTROMETRY [LARGE SCALE ANALYSIS]</scope>
    <source>
        <tissue>Cervix carcinoma</tissue>
    </source>
</reference>
<reference key="15">
    <citation type="journal article" date="2011" name="BMC Syst. Biol.">
        <title>Initial characterization of the human central proteome.</title>
        <authorList>
            <person name="Burkard T.R."/>
            <person name="Planyavsky M."/>
            <person name="Kaupe I."/>
            <person name="Breitwieser F.P."/>
            <person name="Buerckstuemmer T."/>
            <person name="Bennett K.L."/>
            <person name="Superti-Furga G."/>
            <person name="Colinge J."/>
        </authorList>
    </citation>
    <scope>IDENTIFICATION BY MASS SPECTROMETRY [LARGE SCALE ANALYSIS]</scope>
</reference>
<reference key="16">
    <citation type="journal article" date="2011" name="Sci. Signal.">
        <title>System-wide temporal characterization of the proteome and phosphoproteome of human embryonic stem cell differentiation.</title>
        <authorList>
            <person name="Rigbolt K.T."/>
            <person name="Prokhorova T.A."/>
            <person name="Akimov V."/>
            <person name="Henningsen J."/>
            <person name="Johansen P.T."/>
            <person name="Kratchmarova I."/>
            <person name="Kassem M."/>
            <person name="Mann M."/>
            <person name="Olsen J.V."/>
            <person name="Blagoev B."/>
        </authorList>
    </citation>
    <scope>PHOSPHORYLATION [LARGE SCALE ANALYSIS] AT SER-293; THR-295; THR-297 AND SER-300</scope>
    <scope>IDENTIFICATION BY MASS SPECTROMETRY [LARGE SCALE ANALYSIS]</scope>
</reference>
<reference key="17">
    <citation type="journal article" date="2012" name="Proc. Natl. Acad. Sci. U.S.A.">
        <title>N-terminal acetylome analyses and functional insights of the N-terminal acetyltransferase NatB.</title>
        <authorList>
            <person name="Van Damme P."/>
            <person name="Lasa M."/>
            <person name="Polevoda B."/>
            <person name="Gazquez C."/>
            <person name="Elosegui-Artola A."/>
            <person name="Kim D.S."/>
            <person name="De Juan-Pardo E."/>
            <person name="Demeyer K."/>
            <person name="Hole K."/>
            <person name="Larrea E."/>
            <person name="Timmerman E."/>
            <person name="Prieto J."/>
            <person name="Arnesen T."/>
            <person name="Sherman F."/>
            <person name="Gevaert K."/>
            <person name="Aldabe R."/>
        </authorList>
    </citation>
    <scope>ACETYLATION [LARGE SCALE ANALYSIS] AT MET-1</scope>
    <scope>IDENTIFICATION BY MASS SPECTROMETRY [LARGE SCALE ANALYSIS]</scope>
</reference>
<reference key="18">
    <citation type="journal article" date="2013" name="J. Proteome Res.">
        <title>Toward a comprehensive characterization of a human cancer cell phosphoproteome.</title>
        <authorList>
            <person name="Zhou H."/>
            <person name="Di Palma S."/>
            <person name="Preisinger C."/>
            <person name="Peng M."/>
            <person name="Polat A.N."/>
            <person name="Heck A.J."/>
            <person name="Mohammed S."/>
        </authorList>
    </citation>
    <scope>PHOSPHORYLATION [LARGE SCALE ANALYSIS] AT SER-11; THR-249; THR-297; SER-358; SER-419 AND SER-667</scope>
    <scope>IDENTIFICATION BY MASS SPECTROMETRY [LARGE SCALE ANALYSIS]</scope>
    <source>
        <tissue>Cervix carcinoma</tissue>
        <tissue>Erythroleukemia</tissue>
    </source>
</reference>
<reference key="19">
    <citation type="journal article" date="2014" name="J. Proteomics">
        <title>An enzyme assisted RP-RPLC approach for in-depth analysis of human liver phosphoproteome.</title>
        <authorList>
            <person name="Bian Y."/>
            <person name="Song C."/>
            <person name="Cheng K."/>
            <person name="Dong M."/>
            <person name="Wang F."/>
            <person name="Huang J."/>
            <person name="Sun D."/>
            <person name="Wang L."/>
            <person name="Ye M."/>
            <person name="Zou H."/>
        </authorList>
    </citation>
    <scope>PHOSPHORYLATION [LARGE SCALE ANALYSIS] AT THR-249; SER-281; SER-286; SER-327; SER-329; SER-350 AND SER-358</scope>
    <scope>IDENTIFICATION BY MASS SPECTROMETRY [LARGE SCALE ANALYSIS]</scope>
    <source>
        <tissue>Liver</tissue>
    </source>
</reference>
<gene>
    <name type="primary">RAI14</name>
    <name type="synonym">KIAA1334</name>
    <name type="synonym">NORPEG</name>
</gene>
<proteinExistence type="evidence at protein level"/>
<name>RAI14_HUMAN</name>
<sequence>MKSLKAKFRKSDTNEWNKNDDRLLQAVENGDAEKVASLLGKKGASATKHDSEGKTAFHLAAAKGHVECLRVMITHGVDVTAQDTTGHSALHLAAKNSHHECIRKLLQSKCPAESVDSSGKTALHYAAAQGCLQAVQILCEHKSPINLKDLDGNIPLLLAVQNGHSEICHFLLDHGADVNSRNKSGRTALMLACEIGSSNAVEALIKKGADLNLVDSLGYNALHYSKLSENAGIQSLLLSKISQDADLKTPTKPKQHDQVSKISSERSGTPKKRKAPPPPISPTQLSDVSSPRSITSTPLSGKESVFFAEPPFKAEISSIRENKDRLSDSTTGADSLLDISSEADQQDLLSLLQAKVASLTLHNKELQDKLQAKSPKEAEADLSFDSYHSTQTDLGPSLGKPGETSPPDSKSSPSVLIHSLGKSTTDNDVRIQQLQEILQDLQKRLESSEAERKQLQVELQSRRAELVCLNNTEISENSSDLSQKLKETQSKYEEAMKEVLSVQKQMKLGLVSPESMDNYSHFHELRVTEEEINVLKQDLQNALEESERNKEKVRELEEKLVEREKGTVIKPPVEEYEEMKSSYCSVIENMNKEKAFLFEKYQEAQEEIMKLKDTLKSQMTQEASDEAEDMKEAMNRMIDELNKQVSELSQLYKEAQAELEDYRKRKSLEDVTAEYIHKAEHEKLMQLTNVSRAKAEDALSEMKSQYSKVLNELTQLKQLVDAQKENSVSITEHLQVITTLRTAAKEMEEKISNLKEHLASKEVEVAKLEKQLLEEKAAMTDAMVPRSSYEKLQSSLESEVSVLASKLKESVKEKEKVHSEVVQIRSEVSQVKREKENIQTLLKSKEQEVNELLQKFQQAQEELAEMKRYAESSSKLEEDKDKKINEMSKEVTKLKEALNSLSQLSYSTSSSKRQSQQLEALQQQVKQLQNQLAECKKQHQEVISVYRMHLLYAVQGQMDEDVQKVLKQILTMCKNQSQKK</sequence>
<evidence type="ECO:0000250" key="1">
    <source>
        <dbReference type="UniProtKB" id="Q5U312"/>
    </source>
</evidence>
<evidence type="ECO:0000250" key="2">
    <source>
        <dbReference type="UniProtKB" id="Q9EP71"/>
    </source>
</evidence>
<evidence type="ECO:0000255" key="3"/>
<evidence type="ECO:0000256" key="4">
    <source>
        <dbReference type="SAM" id="MobiDB-lite"/>
    </source>
</evidence>
<evidence type="ECO:0000269" key="5">
    <source>
    </source>
</evidence>
<evidence type="ECO:0000269" key="6">
    <source>
    </source>
</evidence>
<evidence type="ECO:0000269" key="7">
    <source>
    </source>
</evidence>
<evidence type="ECO:0000269" key="8">
    <source>
    </source>
</evidence>
<evidence type="ECO:0000269" key="9">
    <source>
    </source>
</evidence>
<evidence type="ECO:0000269" key="10">
    <source>
    </source>
</evidence>
<evidence type="ECO:0000303" key="11">
    <source>
    </source>
</evidence>
<evidence type="ECO:0000303" key="12">
    <source>
    </source>
</evidence>
<evidence type="ECO:0000303" key="13">
    <source ref="3"/>
</evidence>
<evidence type="ECO:0000305" key="14"/>
<evidence type="ECO:0000305" key="15">
    <source>
    </source>
</evidence>
<evidence type="ECO:0000305" key="16">
    <source>
    </source>
</evidence>
<evidence type="ECO:0007744" key="17">
    <source>
    </source>
</evidence>
<evidence type="ECO:0007744" key="18">
    <source>
    </source>
</evidence>
<evidence type="ECO:0007744" key="19">
    <source>
    </source>
</evidence>
<evidence type="ECO:0007744" key="20">
    <source>
    </source>
</evidence>
<evidence type="ECO:0007744" key="21">
    <source>
    </source>
</evidence>
<evidence type="ECO:0007744" key="22">
    <source>
    </source>
</evidence>
<accession>Q9P0K7</accession>
<accession>E9PED3</accession>
<accession>Q6V1W9</accession>
<accession>Q7Z5I4</accession>
<accession>Q7Z733</accession>
<accession>Q9P2L2</accession>
<accession>Q9Y3T5</accession>